<reference key="1">
    <citation type="journal article" date="2009" name="PLoS Genet.">
        <title>Organised genome dynamics in the Escherichia coli species results in highly diverse adaptive paths.</title>
        <authorList>
            <person name="Touchon M."/>
            <person name="Hoede C."/>
            <person name="Tenaillon O."/>
            <person name="Barbe V."/>
            <person name="Baeriswyl S."/>
            <person name="Bidet P."/>
            <person name="Bingen E."/>
            <person name="Bonacorsi S."/>
            <person name="Bouchier C."/>
            <person name="Bouvet O."/>
            <person name="Calteau A."/>
            <person name="Chiapello H."/>
            <person name="Clermont O."/>
            <person name="Cruveiller S."/>
            <person name="Danchin A."/>
            <person name="Diard M."/>
            <person name="Dossat C."/>
            <person name="Karoui M.E."/>
            <person name="Frapy E."/>
            <person name="Garry L."/>
            <person name="Ghigo J.M."/>
            <person name="Gilles A.M."/>
            <person name="Johnson J."/>
            <person name="Le Bouguenec C."/>
            <person name="Lescat M."/>
            <person name="Mangenot S."/>
            <person name="Martinez-Jehanne V."/>
            <person name="Matic I."/>
            <person name="Nassif X."/>
            <person name="Oztas S."/>
            <person name="Petit M.A."/>
            <person name="Pichon C."/>
            <person name="Rouy Z."/>
            <person name="Ruf C.S."/>
            <person name="Schneider D."/>
            <person name="Tourret J."/>
            <person name="Vacherie B."/>
            <person name="Vallenet D."/>
            <person name="Medigue C."/>
            <person name="Rocha E.P.C."/>
            <person name="Denamur E."/>
        </authorList>
    </citation>
    <scope>NUCLEOTIDE SEQUENCE [LARGE SCALE GENOMIC DNA]</scope>
    <source>
        <strain>IAI1</strain>
    </source>
</reference>
<proteinExistence type="inferred from homology"/>
<feature type="chain" id="PRO_1000201326" description="Probable [Fe-S]-dependent transcriptional repressor">
    <location>
        <begin position="1"/>
        <end position="78"/>
    </location>
</feature>
<feature type="binding site" evidence="1">
    <location>
        <position position="56"/>
    </location>
    <ligand>
        <name>iron-sulfur cluster</name>
        <dbReference type="ChEBI" id="CHEBI:30408"/>
    </ligand>
</feature>
<feature type="binding site" evidence="1">
    <location>
        <position position="61"/>
    </location>
    <ligand>
        <name>iron-sulfur cluster</name>
        <dbReference type="ChEBI" id="CHEBI:30408"/>
    </ligand>
</feature>
<feature type="binding site" evidence="1">
    <location>
        <position position="64"/>
    </location>
    <ligand>
        <name>iron-sulfur cluster</name>
        <dbReference type="ChEBI" id="CHEBI:30408"/>
    </ligand>
</feature>
<feature type="binding site" evidence="1">
    <location>
        <position position="70"/>
    </location>
    <ligand>
        <name>iron-sulfur cluster</name>
        <dbReference type="ChEBI" id="CHEBI:30408"/>
    </ligand>
</feature>
<protein>
    <recommendedName>
        <fullName evidence="1">Probable [Fe-S]-dependent transcriptional repressor</fullName>
    </recommendedName>
</protein>
<sequence length="78" mass="8660">MASLIQVRDLLALRGRMEAAQISQTLNTPQPMINAMLQQLESMGKAVRIQEEPDGCLSGSCKSCPEGKACLREWWALR</sequence>
<name>FEOC_ECO8A</name>
<organism>
    <name type="scientific">Escherichia coli O8 (strain IAI1)</name>
    <dbReference type="NCBI Taxonomy" id="585034"/>
    <lineage>
        <taxon>Bacteria</taxon>
        <taxon>Pseudomonadati</taxon>
        <taxon>Pseudomonadota</taxon>
        <taxon>Gammaproteobacteria</taxon>
        <taxon>Enterobacterales</taxon>
        <taxon>Enterobacteriaceae</taxon>
        <taxon>Escherichia</taxon>
    </lineage>
</organism>
<evidence type="ECO:0000255" key="1">
    <source>
        <dbReference type="HAMAP-Rule" id="MF_01586"/>
    </source>
</evidence>
<accession>B7M1W6</accession>
<keyword id="KW-0238">DNA-binding</keyword>
<keyword id="KW-0408">Iron</keyword>
<keyword id="KW-0411">Iron-sulfur</keyword>
<keyword id="KW-0479">Metal-binding</keyword>
<keyword id="KW-0678">Repressor</keyword>
<keyword id="KW-0804">Transcription</keyword>
<keyword id="KW-0805">Transcription regulation</keyword>
<dbReference type="EMBL" id="CU928160">
    <property type="protein sequence ID" value="CAR00353.1"/>
    <property type="molecule type" value="Genomic_DNA"/>
</dbReference>
<dbReference type="RefSeq" id="WP_000157586.1">
    <property type="nucleotide sequence ID" value="NC_011741.1"/>
</dbReference>
<dbReference type="SMR" id="B7M1W6"/>
<dbReference type="GeneID" id="86948257"/>
<dbReference type="KEGG" id="ecr:ECIAI1_3553"/>
<dbReference type="HOGENOM" id="CLU_189182_0_0_6"/>
<dbReference type="GO" id="GO:0003677">
    <property type="term" value="F:DNA binding"/>
    <property type="evidence" value="ECO:0007669"/>
    <property type="project" value="UniProtKB-KW"/>
</dbReference>
<dbReference type="GO" id="GO:0005506">
    <property type="term" value="F:iron ion binding"/>
    <property type="evidence" value="ECO:0007669"/>
    <property type="project" value="UniProtKB-UniRule"/>
</dbReference>
<dbReference type="GO" id="GO:0051536">
    <property type="term" value="F:iron-sulfur cluster binding"/>
    <property type="evidence" value="ECO:0007669"/>
    <property type="project" value="UniProtKB-KW"/>
</dbReference>
<dbReference type="Gene3D" id="1.10.10.10">
    <property type="entry name" value="Winged helix-like DNA-binding domain superfamily/Winged helix DNA-binding domain"/>
    <property type="match status" value="1"/>
</dbReference>
<dbReference type="HAMAP" id="MF_01586">
    <property type="entry name" value="FeoC"/>
    <property type="match status" value="1"/>
</dbReference>
<dbReference type="InterPro" id="IPR023732">
    <property type="entry name" value="FeoC"/>
</dbReference>
<dbReference type="InterPro" id="IPR015102">
    <property type="entry name" value="Tscrpt_reg_HTH_FeoC"/>
</dbReference>
<dbReference type="InterPro" id="IPR036388">
    <property type="entry name" value="WH-like_DNA-bd_sf"/>
</dbReference>
<dbReference type="InterPro" id="IPR036390">
    <property type="entry name" value="WH_DNA-bd_sf"/>
</dbReference>
<dbReference type="NCBIfam" id="NF011960">
    <property type="entry name" value="PRK15431.1"/>
    <property type="match status" value="1"/>
</dbReference>
<dbReference type="Pfam" id="PF09012">
    <property type="entry name" value="FeoC"/>
    <property type="match status" value="1"/>
</dbReference>
<dbReference type="SUPFAM" id="SSF46785">
    <property type="entry name" value="Winged helix' DNA-binding domain"/>
    <property type="match status" value="1"/>
</dbReference>
<comment type="function">
    <text evidence="1">May function as a transcriptional regulator that controls feoABC expression.</text>
</comment>
<comment type="similarity">
    <text evidence="1">Belongs to the FeoC family.</text>
</comment>
<gene>
    <name evidence="1" type="primary">feoC</name>
    <name type="ordered locus">ECIAI1_3553</name>
</gene>